<name>RL20_CORDI</name>
<evidence type="ECO:0000255" key="1">
    <source>
        <dbReference type="HAMAP-Rule" id="MF_00382"/>
    </source>
</evidence>
<evidence type="ECO:0000305" key="2"/>
<proteinExistence type="inferred from homology"/>
<feature type="chain" id="PRO_0000177149" description="Large ribosomal subunit protein bL20">
    <location>
        <begin position="1"/>
        <end position="127"/>
    </location>
</feature>
<dbReference type="EMBL" id="BX248357">
    <property type="protein sequence ID" value="CAE49682.1"/>
    <property type="molecule type" value="Genomic_DNA"/>
</dbReference>
<dbReference type="RefSeq" id="WP_003851301.1">
    <property type="nucleotide sequence ID" value="NC_002935.2"/>
</dbReference>
<dbReference type="SMR" id="Q6NHH5"/>
<dbReference type="STRING" id="257309.DIP1162"/>
<dbReference type="GeneID" id="97331913"/>
<dbReference type="KEGG" id="cdi:DIP1162"/>
<dbReference type="HOGENOM" id="CLU_123265_0_0_11"/>
<dbReference type="Proteomes" id="UP000002198">
    <property type="component" value="Chromosome"/>
</dbReference>
<dbReference type="GO" id="GO:1990904">
    <property type="term" value="C:ribonucleoprotein complex"/>
    <property type="evidence" value="ECO:0007669"/>
    <property type="project" value="UniProtKB-KW"/>
</dbReference>
<dbReference type="GO" id="GO:0005840">
    <property type="term" value="C:ribosome"/>
    <property type="evidence" value="ECO:0007669"/>
    <property type="project" value="UniProtKB-KW"/>
</dbReference>
<dbReference type="GO" id="GO:0019843">
    <property type="term" value="F:rRNA binding"/>
    <property type="evidence" value="ECO:0007669"/>
    <property type="project" value="UniProtKB-UniRule"/>
</dbReference>
<dbReference type="GO" id="GO:0003735">
    <property type="term" value="F:structural constituent of ribosome"/>
    <property type="evidence" value="ECO:0007669"/>
    <property type="project" value="InterPro"/>
</dbReference>
<dbReference type="GO" id="GO:0000027">
    <property type="term" value="P:ribosomal large subunit assembly"/>
    <property type="evidence" value="ECO:0007669"/>
    <property type="project" value="UniProtKB-UniRule"/>
</dbReference>
<dbReference type="GO" id="GO:0006412">
    <property type="term" value="P:translation"/>
    <property type="evidence" value="ECO:0007669"/>
    <property type="project" value="InterPro"/>
</dbReference>
<dbReference type="CDD" id="cd07026">
    <property type="entry name" value="Ribosomal_L20"/>
    <property type="match status" value="1"/>
</dbReference>
<dbReference type="FunFam" id="1.10.1900.20:FF:000001">
    <property type="entry name" value="50S ribosomal protein L20"/>
    <property type="match status" value="1"/>
</dbReference>
<dbReference type="Gene3D" id="6.10.160.10">
    <property type="match status" value="1"/>
</dbReference>
<dbReference type="Gene3D" id="1.10.1900.20">
    <property type="entry name" value="Ribosomal protein L20"/>
    <property type="match status" value="1"/>
</dbReference>
<dbReference type="HAMAP" id="MF_00382">
    <property type="entry name" value="Ribosomal_bL20"/>
    <property type="match status" value="1"/>
</dbReference>
<dbReference type="InterPro" id="IPR005813">
    <property type="entry name" value="Ribosomal_bL20"/>
</dbReference>
<dbReference type="InterPro" id="IPR049946">
    <property type="entry name" value="RIBOSOMAL_L20_CS"/>
</dbReference>
<dbReference type="InterPro" id="IPR035566">
    <property type="entry name" value="Ribosomal_protein_bL20_C"/>
</dbReference>
<dbReference type="NCBIfam" id="TIGR01032">
    <property type="entry name" value="rplT_bact"/>
    <property type="match status" value="1"/>
</dbReference>
<dbReference type="PANTHER" id="PTHR10986">
    <property type="entry name" value="39S RIBOSOMAL PROTEIN L20"/>
    <property type="match status" value="1"/>
</dbReference>
<dbReference type="Pfam" id="PF00453">
    <property type="entry name" value="Ribosomal_L20"/>
    <property type="match status" value="1"/>
</dbReference>
<dbReference type="PRINTS" id="PR00062">
    <property type="entry name" value="RIBOSOMALL20"/>
</dbReference>
<dbReference type="SUPFAM" id="SSF74731">
    <property type="entry name" value="Ribosomal protein L20"/>
    <property type="match status" value="1"/>
</dbReference>
<dbReference type="PROSITE" id="PS00937">
    <property type="entry name" value="RIBOSOMAL_L20"/>
    <property type="match status" value="1"/>
</dbReference>
<gene>
    <name evidence="1" type="primary">rplT</name>
    <name type="ordered locus">DIP1162</name>
</gene>
<organism>
    <name type="scientific">Corynebacterium diphtheriae (strain ATCC 700971 / NCTC 13129 / Biotype gravis)</name>
    <dbReference type="NCBI Taxonomy" id="257309"/>
    <lineage>
        <taxon>Bacteria</taxon>
        <taxon>Bacillati</taxon>
        <taxon>Actinomycetota</taxon>
        <taxon>Actinomycetes</taxon>
        <taxon>Mycobacteriales</taxon>
        <taxon>Corynebacteriaceae</taxon>
        <taxon>Corynebacterium</taxon>
    </lineage>
</organism>
<comment type="function">
    <text evidence="1">Binds directly to 23S ribosomal RNA and is necessary for the in vitro assembly process of the 50S ribosomal subunit. It is not involved in the protein synthesizing functions of that subunit.</text>
</comment>
<comment type="similarity">
    <text evidence="1">Belongs to the bacterial ribosomal protein bL20 family.</text>
</comment>
<accession>Q6NHH5</accession>
<protein>
    <recommendedName>
        <fullName evidence="1">Large ribosomal subunit protein bL20</fullName>
    </recommendedName>
    <alternativeName>
        <fullName evidence="2">50S ribosomal protein L20</fullName>
    </alternativeName>
</protein>
<sequence>MARVKRSLNAKKKRREILKSAKGYRGQRSRLYRKAKEQWLHSMTYAYRDRRARKSEFRKLWITRINAAARMNDITYNRLIQGLRLAEIEVDRKVLADLAVNDFAAFSAICEAAKAALPADVNAPKAA</sequence>
<keyword id="KW-1185">Reference proteome</keyword>
<keyword id="KW-0687">Ribonucleoprotein</keyword>
<keyword id="KW-0689">Ribosomal protein</keyword>
<keyword id="KW-0694">RNA-binding</keyword>
<keyword id="KW-0699">rRNA-binding</keyword>
<reference key="1">
    <citation type="journal article" date="2003" name="Nucleic Acids Res.">
        <title>The complete genome sequence and analysis of Corynebacterium diphtheriae NCTC13129.</title>
        <authorList>
            <person name="Cerdeno-Tarraga A.-M."/>
            <person name="Efstratiou A."/>
            <person name="Dover L.G."/>
            <person name="Holden M.T.G."/>
            <person name="Pallen M.J."/>
            <person name="Bentley S.D."/>
            <person name="Besra G.S."/>
            <person name="Churcher C.M."/>
            <person name="James K.D."/>
            <person name="De Zoysa A."/>
            <person name="Chillingworth T."/>
            <person name="Cronin A."/>
            <person name="Dowd L."/>
            <person name="Feltwell T."/>
            <person name="Hamlin N."/>
            <person name="Holroyd S."/>
            <person name="Jagels K."/>
            <person name="Moule S."/>
            <person name="Quail M.A."/>
            <person name="Rabbinowitsch E."/>
            <person name="Rutherford K.M."/>
            <person name="Thomson N.R."/>
            <person name="Unwin L."/>
            <person name="Whitehead S."/>
            <person name="Barrell B.G."/>
            <person name="Parkhill J."/>
        </authorList>
    </citation>
    <scope>NUCLEOTIDE SEQUENCE [LARGE SCALE GENOMIC DNA]</scope>
    <source>
        <strain>ATCC 700971 / NCTC 13129 / Biotype gravis</strain>
    </source>
</reference>